<comment type="function">
    <text evidence="1">This protein binds specifically to 23S rRNA; its binding is stimulated by other ribosomal proteins, e.g. L4, L17, and L20. It is important during the early stages of 50S assembly. It makes multiple contacts with different domains of the 23S rRNA in the assembled 50S subunit and ribosome (By similarity).</text>
</comment>
<comment type="function">
    <text evidence="1">The globular domain of the protein is located near the polypeptide exit tunnel on the outside of the subunit, while an extended beta-hairpin is found that lines the wall of the exit tunnel in the center of the 70S ribosome.</text>
</comment>
<comment type="subunit">
    <text evidence="1">Part of the 50S ribosomal subunit.</text>
</comment>
<comment type="similarity">
    <text evidence="1">Belongs to the universal ribosomal protein uL22 family.</text>
</comment>
<protein>
    <recommendedName>
        <fullName evidence="1">Large ribosomal subunit protein uL22</fullName>
    </recommendedName>
    <alternativeName>
        <fullName evidence="2">50S ribosomal protein L22</fullName>
    </alternativeName>
</protein>
<dbReference type="EMBL" id="BX936398">
    <property type="protein sequence ID" value="CAH22931.1"/>
    <property type="molecule type" value="Genomic_DNA"/>
</dbReference>
<dbReference type="RefSeq" id="WP_002223844.1">
    <property type="nucleotide sequence ID" value="NZ_CP009712.1"/>
</dbReference>
<dbReference type="SMR" id="Q664S6"/>
<dbReference type="GeneID" id="98190601"/>
<dbReference type="KEGG" id="ypo:BZ17_2894"/>
<dbReference type="KEGG" id="yps:YPTB3693"/>
<dbReference type="PATRIC" id="fig|273123.14.peg.3035"/>
<dbReference type="Proteomes" id="UP000001011">
    <property type="component" value="Chromosome"/>
</dbReference>
<dbReference type="GO" id="GO:0022625">
    <property type="term" value="C:cytosolic large ribosomal subunit"/>
    <property type="evidence" value="ECO:0007669"/>
    <property type="project" value="TreeGrafter"/>
</dbReference>
<dbReference type="GO" id="GO:0019843">
    <property type="term" value="F:rRNA binding"/>
    <property type="evidence" value="ECO:0007669"/>
    <property type="project" value="UniProtKB-UniRule"/>
</dbReference>
<dbReference type="GO" id="GO:0003735">
    <property type="term" value="F:structural constituent of ribosome"/>
    <property type="evidence" value="ECO:0007669"/>
    <property type="project" value="InterPro"/>
</dbReference>
<dbReference type="GO" id="GO:0006412">
    <property type="term" value="P:translation"/>
    <property type="evidence" value="ECO:0007669"/>
    <property type="project" value="UniProtKB-UniRule"/>
</dbReference>
<dbReference type="CDD" id="cd00336">
    <property type="entry name" value="Ribosomal_L22"/>
    <property type="match status" value="1"/>
</dbReference>
<dbReference type="FunFam" id="3.90.470.10:FF:000001">
    <property type="entry name" value="50S ribosomal protein L22"/>
    <property type="match status" value="1"/>
</dbReference>
<dbReference type="Gene3D" id="3.90.470.10">
    <property type="entry name" value="Ribosomal protein L22/L17"/>
    <property type="match status" value="1"/>
</dbReference>
<dbReference type="HAMAP" id="MF_01331_B">
    <property type="entry name" value="Ribosomal_uL22_B"/>
    <property type="match status" value="1"/>
</dbReference>
<dbReference type="InterPro" id="IPR001063">
    <property type="entry name" value="Ribosomal_uL22"/>
</dbReference>
<dbReference type="InterPro" id="IPR005727">
    <property type="entry name" value="Ribosomal_uL22_bac/chlpt-type"/>
</dbReference>
<dbReference type="InterPro" id="IPR047867">
    <property type="entry name" value="Ribosomal_uL22_bac/org-type"/>
</dbReference>
<dbReference type="InterPro" id="IPR018260">
    <property type="entry name" value="Ribosomal_uL22_CS"/>
</dbReference>
<dbReference type="InterPro" id="IPR036394">
    <property type="entry name" value="Ribosomal_uL22_sf"/>
</dbReference>
<dbReference type="NCBIfam" id="TIGR01044">
    <property type="entry name" value="rplV_bact"/>
    <property type="match status" value="1"/>
</dbReference>
<dbReference type="PANTHER" id="PTHR13501">
    <property type="entry name" value="CHLOROPLAST 50S RIBOSOMAL PROTEIN L22-RELATED"/>
    <property type="match status" value="1"/>
</dbReference>
<dbReference type="PANTHER" id="PTHR13501:SF8">
    <property type="entry name" value="LARGE RIBOSOMAL SUBUNIT PROTEIN UL22M"/>
    <property type="match status" value="1"/>
</dbReference>
<dbReference type="Pfam" id="PF00237">
    <property type="entry name" value="Ribosomal_L22"/>
    <property type="match status" value="1"/>
</dbReference>
<dbReference type="SUPFAM" id="SSF54843">
    <property type="entry name" value="Ribosomal protein L22"/>
    <property type="match status" value="1"/>
</dbReference>
<dbReference type="PROSITE" id="PS00464">
    <property type="entry name" value="RIBOSOMAL_L22"/>
    <property type="match status" value="1"/>
</dbReference>
<keyword id="KW-0687">Ribonucleoprotein</keyword>
<keyword id="KW-0689">Ribosomal protein</keyword>
<keyword id="KW-0694">RNA-binding</keyword>
<keyword id="KW-0699">rRNA-binding</keyword>
<proteinExistence type="inferred from homology"/>
<name>RL22_YERPS</name>
<organism>
    <name type="scientific">Yersinia pseudotuberculosis serotype I (strain IP32953)</name>
    <dbReference type="NCBI Taxonomy" id="273123"/>
    <lineage>
        <taxon>Bacteria</taxon>
        <taxon>Pseudomonadati</taxon>
        <taxon>Pseudomonadota</taxon>
        <taxon>Gammaproteobacteria</taxon>
        <taxon>Enterobacterales</taxon>
        <taxon>Yersiniaceae</taxon>
        <taxon>Yersinia</taxon>
    </lineage>
</organism>
<sequence>METIAKHRHARSSAQKVRLVADLIRGKKVSQALETLTYTNKKAAGLVKKVLESAIANAEHNDGADIDDLKVTKIFVDEGPSMKRIMPRAKGRADRILKRTSHITVVVSDR</sequence>
<evidence type="ECO:0000255" key="1">
    <source>
        <dbReference type="HAMAP-Rule" id="MF_01331"/>
    </source>
</evidence>
<evidence type="ECO:0000305" key="2"/>
<reference key="1">
    <citation type="journal article" date="2004" name="Proc. Natl. Acad. Sci. U.S.A.">
        <title>Insights into the evolution of Yersinia pestis through whole-genome comparison with Yersinia pseudotuberculosis.</title>
        <authorList>
            <person name="Chain P.S.G."/>
            <person name="Carniel E."/>
            <person name="Larimer F.W."/>
            <person name="Lamerdin J."/>
            <person name="Stoutland P.O."/>
            <person name="Regala W.M."/>
            <person name="Georgescu A.M."/>
            <person name="Vergez L.M."/>
            <person name="Land M.L."/>
            <person name="Motin V.L."/>
            <person name="Brubaker R.R."/>
            <person name="Fowler J."/>
            <person name="Hinnebusch J."/>
            <person name="Marceau M."/>
            <person name="Medigue C."/>
            <person name="Simonet M."/>
            <person name="Chenal-Francisque V."/>
            <person name="Souza B."/>
            <person name="Dacheux D."/>
            <person name="Elliott J.M."/>
            <person name="Derbise A."/>
            <person name="Hauser L.J."/>
            <person name="Garcia E."/>
        </authorList>
    </citation>
    <scope>NUCLEOTIDE SEQUENCE [LARGE SCALE GENOMIC DNA]</scope>
    <source>
        <strain>IP32953</strain>
    </source>
</reference>
<feature type="chain" id="PRO_0000243232" description="Large ribosomal subunit protein uL22">
    <location>
        <begin position="1"/>
        <end position="110"/>
    </location>
</feature>
<gene>
    <name evidence="1" type="primary">rplV</name>
    <name type="ordered locus">YPTB3693</name>
</gene>
<accession>Q664S6</accession>